<gene>
    <name evidence="1" type="primary">murA2</name>
    <name type="ordered locus">BCE33L5034</name>
</gene>
<name>MURA2_BACCZ</name>
<sequence>MEKLLIEGGRALNGTIRVSGAKNSAVALIPATILADTPVTIGGVPNISDVKMLGDLLEEIGGRVTYGQEEEMVVDPSNMVAMPLPNGKVKKLRASYYLMGAMLGRFKKAVIGLPGGCHLGPRPIDQHIKGFEALGAHVTNEQGAIYLRADELRGARIYLDVVSVGATINIMLAAVRAKGRTVIENAAKEPEIIDVATLLTSMGARIKGAGTDVIRIDGVDSLHGCHHTIIPDRIEAGTYMILGAASGGEVTVDNVIPQHLESVTAKLREAGVQVETNDDQITVNGDRRLKVVDIKTLVYPGFPTDLQQPFTTLLTKAHGTGVVTDTIYGARFKHIDELRRMNAQIKVEGRSAIVTGPVLLQGAKVKASDLRAGAALVIAGLMADGITEVTGLEHIDRGYENIVDKLKGLGANIWREQMTKQEIEEMKNA</sequence>
<keyword id="KW-0131">Cell cycle</keyword>
<keyword id="KW-0132">Cell division</keyword>
<keyword id="KW-0133">Cell shape</keyword>
<keyword id="KW-0961">Cell wall biogenesis/degradation</keyword>
<keyword id="KW-0963">Cytoplasm</keyword>
<keyword id="KW-0573">Peptidoglycan synthesis</keyword>
<keyword id="KW-0670">Pyruvate</keyword>
<keyword id="KW-0808">Transferase</keyword>
<feature type="chain" id="PRO_0000231158" description="UDP-N-acetylglucosamine 1-carboxyvinyltransferase 2">
    <location>
        <begin position="1"/>
        <end position="429"/>
    </location>
</feature>
<feature type="active site" description="Proton donor" evidence="1">
    <location>
        <position position="117"/>
    </location>
</feature>
<feature type="binding site" evidence="1">
    <location>
        <begin position="22"/>
        <end position="23"/>
    </location>
    <ligand>
        <name>phosphoenolpyruvate</name>
        <dbReference type="ChEBI" id="CHEBI:58702"/>
    </ligand>
</feature>
<feature type="binding site" evidence="1">
    <location>
        <position position="93"/>
    </location>
    <ligand>
        <name>UDP-N-acetyl-alpha-D-glucosamine</name>
        <dbReference type="ChEBI" id="CHEBI:57705"/>
    </ligand>
</feature>
<feature type="binding site" evidence="1">
    <location>
        <begin position="122"/>
        <end position="126"/>
    </location>
    <ligand>
        <name>UDP-N-acetyl-alpha-D-glucosamine</name>
        <dbReference type="ChEBI" id="CHEBI:57705"/>
    </ligand>
</feature>
<feature type="binding site" evidence="1">
    <location>
        <position position="305"/>
    </location>
    <ligand>
        <name>UDP-N-acetyl-alpha-D-glucosamine</name>
        <dbReference type="ChEBI" id="CHEBI:57705"/>
    </ligand>
</feature>
<feature type="binding site" evidence="1">
    <location>
        <position position="327"/>
    </location>
    <ligand>
        <name>UDP-N-acetyl-alpha-D-glucosamine</name>
        <dbReference type="ChEBI" id="CHEBI:57705"/>
    </ligand>
</feature>
<feature type="modified residue" description="2-(S-cysteinyl)pyruvic acid O-phosphothioketal" evidence="1">
    <location>
        <position position="117"/>
    </location>
</feature>
<reference key="1">
    <citation type="journal article" date="2006" name="J. Bacteriol.">
        <title>Pathogenomic sequence analysis of Bacillus cereus and Bacillus thuringiensis isolates closely related to Bacillus anthracis.</title>
        <authorList>
            <person name="Han C.S."/>
            <person name="Xie G."/>
            <person name="Challacombe J.F."/>
            <person name="Altherr M.R."/>
            <person name="Bhotika S.S."/>
            <person name="Bruce D."/>
            <person name="Campbell C.S."/>
            <person name="Campbell M.L."/>
            <person name="Chen J."/>
            <person name="Chertkov O."/>
            <person name="Cleland C."/>
            <person name="Dimitrijevic M."/>
            <person name="Doggett N.A."/>
            <person name="Fawcett J.J."/>
            <person name="Glavina T."/>
            <person name="Goodwin L.A."/>
            <person name="Hill K.K."/>
            <person name="Hitchcock P."/>
            <person name="Jackson P.J."/>
            <person name="Keim P."/>
            <person name="Kewalramani A.R."/>
            <person name="Longmire J."/>
            <person name="Lucas S."/>
            <person name="Malfatti S."/>
            <person name="McMurry K."/>
            <person name="Meincke L.J."/>
            <person name="Misra M."/>
            <person name="Moseman B.L."/>
            <person name="Mundt M."/>
            <person name="Munk A.C."/>
            <person name="Okinaka R.T."/>
            <person name="Parson-Quintana B."/>
            <person name="Reilly L.P."/>
            <person name="Richardson P."/>
            <person name="Robinson D.L."/>
            <person name="Rubin E."/>
            <person name="Saunders E."/>
            <person name="Tapia R."/>
            <person name="Tesmer J.G."/>
            <person name="Thayer N."/>
            <person name="Thompson L.S."/>
            <person name="Tice H."/>
            <person name="Ticknor L.O."/>
            <person name="Wills P.L."/>
            <person name="Brettin T.S."/>
            <person name="Gilna P."/>
        </authorList>
    </citation>
    <scope>NUCLEOTIDE SEQUENCE [LARGE SCALE GENOMIC DNA]</scope>
    <source>
        <strain>ZK / E33L</strain>
    </source>
</reference>
<dbReference type="EC" id="2.5.1.7" evidence="1"/>
<dbReference type="EMBL" id="CP000001">
    <property type="protein sequence ID" value="AAU15245.1"/>
    <property type="molecule type" value="Genomic_DNA"/>
</dbReference>
<dbReference type="SMR" id="Q630R4"/>
<dbReference type="KEGG" id="bcz:BCE33L5034"/>
<dbReference type="PATRIC" id="fig|288681.22.peg.310"/>
<dbReference type="UniPathway" id="UPA00219"/>
<dbReference type="Proteomes" id="UP000002612">
    <property type="component" value="Chromosome"/>
</dbReference>
<dbReference type="GO" id="GO:0005737">
    <property type="term" value="C:cytoplasm"/>
    <property type="evidence" value="ECO:0007669"/>
    <property type="project" value="UniProtKB-SubCell"/>
</dbReference>
<dbReference type="GO" id="GO:0008760">
    <property type="term" value="F:UDP-N-acetylglucosamine 1-carboxyvinyltransferase activity"/>
    <property type="evidence" value="ECO:0007669"/>
    <property type="project" value="UniProtKB-UniRule"/>
</dbReference>
<dbReference type="GO" id="GO:0051301">
    <property type="term" value="P:cell division"/>
    <property type="evidence" value="ECO:0007669"/>
    <property type="project" value="UniProtKB-KW"/>
</dbReference>
<dbReference type="GO" id="GO:0071555">
    <property type="term" value="P:cell wall organization"/>
    <property type="evidence" value="ECO:0007669"/>
    <property type="project" value="UniProtKB-KW"/>
</dbReference>
<dbReference type="GO" id="GO:0009252">
    <property type="term" value="P:peptidoglycan biosynthetic process"/>
    <property type="evidence" value="ECO:0007669"/>
    <property type="project" value="UniProtKB-UniRule"/>
</dbReference>
<dbReference type="GO" id="GO:0008360">
    <property type="term" value="P:regulation of cell shape"/>
    <property type="evidence" value="ECO:0007669"/>
    <property type="project" value="UniProtKB-KW"/>
</dbReference>
<dbReference type="GO" id="GO:0019277">
    <property type="term" value="P:UDP-N-acetylgalactosamine biosynthetic process"/>
    <property type="evidence" value="ECO:0007669"/>
    <property type="project" value="InterPro"/>
</dbReference>
<dbReference type="CDD" id="cd01555">
    <property type="entry name" value="UdpNAET"/>
    <property type="match status" value="1"/>
</dbReference>
<dbReference type="FunFam" id="3.65.10.10:FF:000001">
    <property type="entry name" value="UDP-N-acetylglucosamine 1-carboxyvinyltransferase"/>
    <property type="match status" value="1"/>
</dbReference>
<dbReference type="Gene3D" id="3.65.10.10">
    <property type="entry name" value="Enolpyruvate transferase domain"/>
    <property type="match status" value="2"/>
</dbReference>
<dbReference type="HAMAP" id="MF_00111">
    <property type="entry name" value="MurA"/>
    <property type="match status" value="1"/>
</dbReference>
<dbReference type="InterPro" id="IPR001986">
    <property type="entry name" value="Enolpyruvate_Tfrase_dom"/>
</dbReference>
<dbReference type="InterPro" id="IPR036968">
    <property type="entry name" value="Enolpyruvate_Tfrase_sf"/>
</dbReference>
<dbReference type="InterPro" id="IPR050068">
    <property type="entry name" value="MurA_subfamily"/>
</dbReference>
<dbReference type="InterPro" id="IPR013792">
    <property type="entry name" value="RNA3'P_cycl/enolpyr_Trfase_a/b"/>
</dbReference>
<dbReference type="InterPro" id="IPR005750">
    <property type="entry name" value="UDP_GlcNAc_COvinyl_MurA"/>
</dbReference>
<dbReference type="NCBIfam" id="TIGR01072">
    <property type="entry name" value="murA"/>
    <property type="match status" value="1"/>
</dbReference>
<dbReference type="NCBIfam" id="NF006873">
    <property type="entry name" value="PRK09369.1"/>
    <property type="match status" value="1"/>
</dbReference>
<dbReference type="NCBIfam" id="NF009470">
    <property type="entry name" value="PRK12830.1"/>
    <property type="match status" value="1"/>
</dbReference>
<dbReference type="PANTHER" id="PTHR43783">
    <property type="entry name" value="UDP-N-ACETYLGLUCOSAMINE 1-CARBOXYVINYLTRANSFERASE"/>
    <property type="match status" value="1"/>
</dbReference>
<dbReference type="PANTHER" id="PTHR43783:SF2">
    <property type="entry name" value="UDP-N-ACETYLGLUCOSAMINE 1-CARBOXYVINYLTRANSFERASE 2"/>
    <property type="match status" value="1"/>
</dbReference>
<dbReference type="Pfam" id="PF00275">
    <property type="entry name" value="EPSP_synthase"/>
    <property type="match status" value="1"/>
</dbReference>
<dbReference type="SUPFAM" id="SSF55205">
    <property type="entry name" value="EPT/RTPC-like"/>
    <property type="match status" value="1"/>
</dbReference>
<proteinExistence type="inferred from homology"/>
<accession>Q630R4</accession>
<evidence type="ECO:0000255" key="1">
    <source>
        <dbReference type="HAMAP-Rule" id="MF_00111"/>
    </source>
</evidence>
<protein>
    <recommendedName>
        <fullName evidence="1">UDP-N-acetylglucosamine 1-carboxyvinyltransferase 2</fullName>
        <ecNumber evidence="1">2.5.1.7</ecNumber>
    </recommendedName>
    <alternativeName>
        <fullName evidence="1">Enoylpyruvate transferase 2</fullName>
    </alternativeName>
    <alternativeName>
        <fullName evidence="1">UDP-N-acetylglucosamine enolpyruvyl transferase 2</fullName>
        <shortName evidence="1">EPT 2</shortName>
    </alternativeName>
</protein>
<comment type="function">
    <text evidence="1">Cell wall formation. Adds enolpyruvyl to UDP-N-acetylglucosamine.</text>
</comment>
<comment type="catalytic activity">
    <reaction evidence="1">
        <text>phosphoenolpyruvate + UDP-N-acetyl-alpha-D-glucosamine = UDP-N-acetyl-3-O-(1-carboxyvinyl)-alpha-D-glucosamine + phosphate</text>
        <dbReference type="Rhea" id="RHEA:18681"/>
        <dbReference type="ChEBI" id="CHEBI:43474"/>
        <dbReference type="ChEBI" id="CHEBI:57705"/>
        <dbReference type="ChEBI" id="CHEBI:58702"/>
        <dbReference type="ChEBI" id="CHEBI:68483"/>
        <dbReference type="EC" id="2.5.1.7"/>
    </reaction>
</comment>
<comment type="pathway">
    <text evidence="1">Cell wall biogenesis; peptidoglycan biosynthesis.</text>
</comment>
<comment type="subcellular location">
    <subcellularLocation>
        <location evidence="1">Cytoplasm</location>
    </subcellularLocation>
</comment>
<comment type="similarity">
    <text evidence="1">Belongs to the EPSP synthase family. MurA subfamily.</text>
</comment>
<organism>
    <name type="scientific">Bacillus cereus (strain ZK / E33L)</name>
    <dbReference type="NCBI Taxonomy" id="288681"/>
    <lineage>
        <taxon>Bacteria</taxon>
        <taxon>Bacillati</taxon>
        <taxon>Bacillota</taxon>
        <taxon>Bacilli</taxon>
        <taxon>Bacillales</taxon>
        <taxon>Bacillaceae</taxon>
        <taxon>Bacillus</taxon>
        <taxon>Bacillus cereus group</taxon>
    </lineage>
</organism>